<comment type="function">
    <text evidence="3">Component of the cytochrome c oxidase, the last enzyme in the mitochondrial electron transport chain which drives oxidative phosphorylation. The respiratory chain contains 3 multisubunit complexes succinate dehydrogenase (complex II, CII), ubiquinol-cytochrome c oxidoreductase (cytochrome b-c1 complex, complex III, CIII) and cytochrome c oxidase (complex IV, CIV), that cooperate to transfer electrons derived from NADH and succinate to molecular oxygen, creating an electrochemical gradient over the inner membrane that drives transmembrane transport and the ATP synthase. Cytochrome c oxidase is the component of the respiratory chain that catalyzes the reduction of oxygen to water. Electrons originating from reduced cytochrome c in the intermembrane space (IMS) are transferred via the dinuclear copper A center (CU(A)) of subunit 2 and heme A of subunit 1 to the active site in subunit 1, a binuclear center (BNC) formed by heme A3 and copper B (CU(B)). The BNC reduces molecular oxygen to 2 water molecules using 4 electrons from cytochrome c in the IMS and 4 protons from the mitochondrial matrix.</text>
</comment>
<comment type="catalytic activity">
    <reaction evidence="3">
        <text>4 Fe(II)-[cytochrome c] + O2 + 8 H(+)(in) = 4 Fe(III)-[cytochrome c] + 2 H2O + 4 H(+)(out)</text>
        <dbReference type="Rhea" id="RHEA:11436"/>
        <dbReference type="Rhea" id="RHEA-COMP:10350"/>
        <dbReference type="Rhea" id="RHEA-COMP:14399"/>
        <dbReference type="ChEBI" id="CHEBI:15377"/>
        <dbReference type="ChEBI" id="CHEBI:15378"/>
        <dbReference type="ChEBI" id="CHEBI:15379"/>
        <dbReference type="ChEBI" id="CHEBI:29033"/>
        <dbReference type="ChEBI" id="CHEBI:29034"/>
        <dbReference type="EC" id="7.1.1.9"/>
    </reaction>
    <physiologicalReaction direction="left-to-right" evidence="3">
        <dbReference type="Rhea" id="RHEA:11437"/>
    </physiologicalReaction>
</comment>
<comment type="cofactor">
    <cofactor evidence="2">
        <name>heme</name>
        <dbReference type="ChEBI" id="CHEBI:30413"/>
    </cofactor>
    <text evidence="2">Binds 2 heme A groups non-covalently per subunit.</text>
</comment>
<comment type="cofactor">
    <cofactor evidence="2">
        <name>Cu cation</name>
        <dbReference type="ChEBI" id="CHEBI:23378"/>
    </cofactor>
    <text evidence="2">Binds a copper B center.</text>
</comment>
<comment type="pathway">
    <text evidence="3">Energy metabolism; oxidative phosphorylation.</text>
</comment>
<comment type="subunit">
    <text evidence="1 2">Component of the cytochrome c oxidase (complex IV, CIV), a multisubunit enzyme composed of 14 subunits. The complex is composed of a catalytic core of 3 subunits MT-CO1, MT-CO2 and MT-CO3, encoded in the mitochondrial DNA, and 11 supernumerary subunits COX4I, COX5A, COX5B, COX6A, COX6B, COX6C, COX7A, COX7B, COX7C, COX8 and NDUFA4, which are encoded in the nuclear genome. The complex exists as a monomer or a dimer and forms supercomplexes (SCs) in the inner mitochondrial membrane with NADH-ubiquinone oxidoreductase (complex I, CI) and ubiquinol-cytochrome c oxidoreductase (cytochrome b-c1 complex, complex III, CIII), resulting in different assemblies (supercomplex SCI(1)III(2)IV(1) and megacomplex MCI(2)III(2)IV(2)) (By similarity). As a newly synthesized protein, rapidly incorporates into a multi-subunit assembly intermediate in the inner membrane, called MITRAC (mitochondrial translation regulation assembly intermediate of cytochrome c oxidase) complex, whose core components are COA3/MITRAC12 and COX14. Within the MITRAC complex, interacts with COA3 and with SMIM20/MITRAC7; the interaction with SMIM20 stabilizes the newly synthesized MT-CO1 and prevents its premature turnover. Interacts with TMEM177 in a COX20-dependent manner (By similarity).</text>
</comment>
<comment type="subcellular location">
    <subcellularLocation>
        <location evidence="2">Mitochondrion inner membrane</location>
        <topology evidence="2">Multi-pass membrane protein</topology>
    </subcellularLocation>
</comment>
<comment type="similarity">
    <text evidence="6">Belongs to the heme-copper respiratory oxidase family.</text>
</comment>
<organism>
    <name type="scientific">Canis lupus</name>
    <name type="common">Gray wolf</name>
    <dbReference type="NCBI Taxonomy" id="9612"/>
    <lineage>
        <taxon>Eukaryota</taxon>
        <taxon>Metazoa</taxon>
        <taxon>Chordata</taxon>
        <taxon>Craniata</taxon>
        <taxon>Vertebrata</taxon>
        <taxon>Euteleostomi</taxon>
        <taxon>Mammalia</taxon>
        <taxon>Eutheria</taxon>
        <taxon>Laurasiatheria</taxon>
        <taxon>Carnivora</taxon>
        <taxon>Caniformia</taxon>
        <taxon>Canidae</taxon>
        <taxon>Canis</taxon>
    </lineage>
</organism>
<feature type="chain" id="PRO_0000269704" description="Cytochrome c oxidase subunit 1">
    <location>
        <begin position="1"/>
        <end position="514"/>
    </location>
</feature>
<feature type="topological domain" description="Mitochondrial matrix" evidence="2">
    <location>
        <begin position="1"/>
        <end position="11"/>
    </location>
</feature>
<feature type="transmembrane region" description="Helical; Name=I" evidence="2">
    <location>
        <begin position="12"/>
        <end position="40"/>
    </location>
</feature>
<feature type="topological domain" description="Mitochondrial intermembrane" evidence="2">
    <location>
        <begin position="41"/>
        <end position="50"/>
    </location>
</feature>
<feature type="transmembrane region" description="Helical; Name=II" evidence="2">
    <location>
        <begin position="51"/>
        <end position="86"/>
    </location>
</feature>
<feature type="topological domain" description="Mitochondrial matrix" evidence="2">
    <location>
        <begin position="87"/>
        <end position="94"/>
    </location>
</feature>
<feature type="transmembrane region" description="Helical; Name=III" evidence="2">
    <location>
        <begin position="95"/>
        <end position="117"/>
    </location>
</feature>
<feature type="topological domain" description="Mitochondrial intermembrane" evidence="2">
    <location>
        <begin position="118"/>
        <end position="140"/>
    </location>
</feature>
<feature type="transmembrane region" description="Helical; Name=IV" evidence="2">
    <location>
        <begin position="141"/>
        <end position="170"/>
    </location>
</feature>
<feature type="topological domain" description="Mitochondrial matrix" evidence="2">
    <location>
        <begin position="171"/>
        <end position="182"/>
    </location>
</feature>
<feature type="transmembrane region" description="Helical; Name=V" evidence="2">
    <location>
        <begin position="183"/>
        <end position="212"/>
    </location>
</feature>
<feature type="topological domain" description="Mitochondrial intermembrane" evidence="2">
    <location>
        <begin position="213"/>
        <end position="227"/>
    </location>
</feature>
<feature type="transmembrane region" description="Helical; Name=VI" evidence="2">
    <location>
        <begin position="228"/>
        <end position="261"/>
    </location>
</feature>
<feature type="topological domain" description="Mitochondrial matrix" evidence="2">
    <location>
        <begin position="262"/>
        <end position="269"/>
    </location>
</feature>
<feature type="transmembrane region" description="Helical; Name=VII" evidence="2">
    <location>
        <begin position="270"/>
        <end position="286"/>
    </location>
</feature>
<feature type="topological domain" description="Mitochondrial intermembrane" evidence="2">
    <location>
        <begin position="287"/>
        <end position="298"/>
    </location>
</feature>
<feature type="transmembrane region" description="Helical; Name=VIII" evidence="2">
    <location>
        <begin position="299"/>
        <end position="327"/>
    </location>
</feature>
<feature type="topological domain" description="Mitochondrial matrix" evidence="2">
    <location>
        <begin position="328"/>
        <end position="335"/>
    </location>
</feature>
<feature type="transmembrane region" description="Helical; Name=IX" evidence="2">
    <location>
        <begin position="336"/>
        <end position="357"/>
    </location>
</feature>
<feature type="topological domain" description="Mitochondrial intermembrane" evidence="2">
    <location>
        <begin position="358"/>
        <end position="370"/>
    </location>
</feature>
<feature type="transmembrane region" description="Helical; Name=X" evidence="2">
    <location>
        <begin position="371"/>
        <end position="400"/>
    </location>
</feature>
<feature type="topological domain" description="Mitochondrial matrix" evidence="2">
    <location>
        <begin position="401"/>
        <end position="406"/>
    </location>
</feature>
<feature type="transmembrane region" description="Helical; Name=XI" evidence="2">
    <location>
        <begin position="407"/>
        <end position="433"/>
    </location>
</feature>
<feature type="topological domain" description="Mitochondrial intermembrane" evidence="2">
    <location>
        <begin position="434"/>
        <end position="446"/>
    </location>
</feature>
<feature type="transmembrane region" description="Helical; Name=XII" evidence="2">
    <location>
        <begin position="447"/>
        <end position="478"/>
    </location>
</feature>
<feature type="topological domain" description="Mitochondrial matrix" evidence="2">
    <location>
        <begin position="479"/>
        <end position="514"/>
    </location>
</feature>
<feature type="binding site" evidence="2">
    <location>
        <position position="40"/>
    </location>
    <ligand>
        <name>Na(+)</name>
        <dbReference type="ChEBI" id="CHEBI:29101"/>
    </ligand>
</feature>
<feature type="binding site" evidence="2">
    <location>
        <position position="45"/>
    </location>
    <ligand>
        <name>Na(+)</name>
        <dbReference type="ChEBI" id="CHEBI:29101"/>
    </ligand>
</feature>
<feature type="binding site" description="axial binding residue" evidence="2">
    <location>
        <position position="61"/>
    </location>
    <ligand>
        <name>Fe(II)-heme a</name>
        <dbReference type="ChEBI" id="CHEBI:61715"/>
        <note>low-spin</note>
    </ligand>
    <ligandPart>
        <name>Fe</name>
        <dbReference type="ChEBI" id="CHEBI:18248"/>
    </ligandPart>
</feature>
<feature type="binding site" evidence="2">
    <location>
        <position position="240"/>
    </location>
    <ligand>
        <name>Cu cation</name>
        <dbReference type="ChEBI" id="CHEBI:23378"/>
        <label>B</label>
    </ligand>
</feature>
<feature type="binding site" evidence="2">
    <location>
        <position position="244"/>
    </location>
    <ligand>
        <name>O2</name>
        <dbReference type="ChEBI" id="CHEBI:15379"/>
    </ligand>
</feature>
<feature type="binding site" evidence="2">
    <location>
        <position position="290"/>
    </location>
    <ligand>
        <name>Cu cation</name>
        <dbReference type="ChEBI" id="CHEBI:23378"/>
        <label>B</label>
    </ligand>
</feature>
<feature type="binding site" evidence="2">
    <location>
        <position position="291"/>
    </location>
    <ligand>
        <name>Cu cation</name>
        <dbReference type="ChEBI" id="CHEBI:23378"/>
        <label>B</label>
    </ligand>
</feature>
<feature type="binding site" evidence="2">
    <location>
        <position position="368"/>
    </location>
    <ligand>
        <name>Mg(2+)</name>
        <dbReference type="ChEBI" id="CHEBI:18420"/>
        <note>ligand shared with MT-CO2</note>
    </ligand>
</feature>
<feature type="binding site" evidence="2">
    <location>
        <position position="369"/>
    </location>
    <ligand>
        <name>Mg(2+)</name>
        <dbReference type="ChEBI" id="CHEBI:18420"/>
        <note>ligand shared with MT-CO2</note>
    </ligand>
</feature>
<feature type="binding site" description="axial binding residue" evidence="2">
    <location>
        <position position="376"/>
    </location>
    <ligand>
        <name>heme a3</name>
        <dbReference type="ChEBI" id="CHEBI:83282"/>
        <note>high-spin</note>
    </ligand>
    <ligandPart>
        <name>Fe</name>
        <dbReference type="ChEBI" id="CHEBI:18248"/>
    </ligandPart>
</feature>
<feature type="binding site" description="axial binding residue" evidence="2">
    <location>
        <position position="378"/>
    </location>
    <ligand>
        <name>Fe(II)-heme a</name>
        <dbReference type="ChEBI" id="CHEBI:61715"/>
        <note>low-spin</note>
    </ligand>
    <ligandPart>
        <name>Fe</name>
        <dbReference type="ChEBI" id="CHEBI:18248"/>
    </ligandPart>
</feature>
<feature type="binding site" evidence="2">
    <location>
        <position position="441"/>
    </location>
    <ligand>
        <name>Na(+)</name>
        <dbReference type="ChEBI" id="CHEBI:29101"/>
    </ligand>
</feature>
<feature type="cross-link" description="1'-histidyl-3'-tyrosine (His-Tyr)" evidence="2">
    <location>
        <begin position="240"/>
        <end position="244"/>
    </location>
</feature>
<feature type="sequence variant" evidence="4 5">
    <original>I</original>
    <variation>V</variation>
    <location>
        <position position="512"/>
    </location>
</feature>
<protein>
    <recommendedName>
        <fullName>Cytochrome c oxidase subunit 1</fullName>
        <ecNumber>7.1.1.9</ecNumber>
    </recommendedName>
    <alternativeName>
        <fullName>Cytochrome c oxidase polypeptide I</fullName>
    </alternativeName>
</protein>
<keyword id="KW-0106">Calcium</keyword>
<keyword id="KW-0186">Copper</keyword>
<keyword id="KW-0249">Electron transport</keyword>
<keyword id="KW-0349">Heme</keyword>
<keyword id="KW-0408">Iron</keyword>
<keyword id="KW-0460">Magnesium</keyword>
<keyword id="KW-0472">Membrane</keyword>
<keyword id="KW-0479">Metal-binding</keyword>
<keyword id="KW-0496">Mitochondrion</keyword>
<keyword id="KW-0999">Mitochondrion inner membrane</keyword>
<keyword id="KW-0679">Respiratory chain</keyword>
<keyword id="KW-0915">Sodium</keyword>
<keyword id="KW-1278">Translocase</keyword>
<keyword id="KW-0812">Transmembrane</keyword>
<keyword id="KW-1133">Transmembrane helix</keyword>
<keyword id="KW-0813">Transport</keyword>
<sequence length="514" mass="57039">MFINRWLFSTNHKDIGTLYLLFGAWAGMVGTALSLLIRAELGQPGTLLGDDQIYNVIVTAHAFVMIFFMVMPIMIGGFGNWLVPLMIGAPDMAFPRMNNMSFWLLPPSFLLLLASSMVEAGAGTGWTVYPPLAGNLAHAGASVDLTIFSLHLAGVSSILGAINFITTIINMKPPAMSQYQTPLFVWSVLITAVLLLLSLPVLAAGITMLLTDRNLNTTFFDPAGGGDPILYQHLFWFFGHPEVYILILPGFGMISHIVTYYSGKKEPFGYMGMVWAMMSIGFLGFIVWAHHMFTVGMDVDTRAYFTSATMIIAIPTGVKVFSWLATLHGGNIKWSPAMLWALGFIFLFTVGGLTGIVLANSSLDIVLHDTYYVVAHFHYVLSMGAVFAIMGGFAHWFPLFSGYTLNDTWAKIHFTIMFVGVNMTFFPQHFLGLSGMPRRYSDYPDAYTTWNTVSSMGSFISLTAVMLMIFMIWEAFASKREVAMVELTTTNIEWLHGCPPPYHTFEEPTYVIQK</sequence>
<accession>Q1HKA1</accession>
<accession>Q3L6Z2</accession>
<gene>
    <name type="primary">MT-CO1</name>
    <name type="synonym">COI</name>
    <name type="synonym">COXI</name>
    <name type="synonym">MTCO1</name>
</gene>
<reference key="1">
    <citation type="journal article" date="2005" name="Mol. Phylogenet. Evol.">
        <title>A phylogeny of the Caniformia (order Carnivora) based on 12 complete protein-coding mitochondrial genes.</title>
        <authorList>
            <person name="Delisle I."/>
            <person name="Strobeck C."/>
        </authorList>
    </citation>
    <scope>NUCLEOTIDE SEQUENCE [GENOMIC DNA]</scope>
    <scope>VARIANT VAL-512</scope>
</reference>
<reference key="2">
    <citation type="journal article" date="2006" name="Genome Res.">
        <title>Relaxation of selective constraint on dog mitochondrial DNA following domestication.</title>
        <authorList>
            <person name="Bjornerfeldt S."/>
            <person name="Webster M.T."/>
            <person name="Vila C."/>
        </authorList>
    </citation>
    <scope>NUCLEOTIDE SEQUENCE [GENOMIC DNA]</scope>
    <scope>VARIANT VAL-512</scope>
</reference>
<evidence type="ECO:0000250" key="1">
    <source>
        <dbReference type="UniProtKB" id="P00395"/>
    </source>
</evidence>
<evidence type="ECO:0000250" key="2">
    <source>
        <dbReference type="UniProtKB" id="P00396"/>
    </source>
</evidence>
<evidence type="ECO:0000250" key="3">
    <source>
        <dbReference type="UniProtKB" id="P00401"/>
    </source>
</evidence>
<evidence type="ECO:0000269" key="4">
    <source>
    </source>
</evidence>
<evidence type="ECO:0000269" key="5">
    <source>
    </source>
</evidence>
<evidence type="ECO:0000305" key="6"/>
<dbReference type="EC" id="7.1.1.9"/>
<dbReference type="EMBL" id="AY598496">
    <property type="protein sequence ID" value="AAU00442.1"/>
    <property type="molecule type" value="Genomic_DNA"/>
</dbReference>
<dbReference type="EMBL" id="DQ480503">
    <property type="protein sequence ID" value="ABE48157.1"/>
    <property type="molecule type" value="Genomic_DNA"/>
</dbReference>
<dbReference type="EMBL" id="DQ480504">
    <property type="protein sequence ID" value="ABE48170.1"/>
    <property type="molecule type" value="Genomic_DNA"/>
</dbReference>
<dbReference type="EMBL" id="DQ480505">
    <property type="protein sequence ID" value="ABE48183.1"/>
    <property type="molecule type" value="Genomic_DNA"/>
</dbReference>
<dbReference type="EMBL" id="DQ480506">
    <property type="protein sequence ID" value="ABE48196.1"/>
    <property type="molecule type" value="Genomic_DNA"/>
</dbReference>
<dbReference type="EMBL" id="DQ480507">
    <property type="protein sequence ID" value="ABE48209.1"/>
    <property type="molecule type" value="Genomic_DNA"/>
</dbReference>
<dbReference type="EMBL" id="DQ480508">
    <property type="protein sequence ID" value="ABE48222.1"/>
    <property type="molecule type" value="Genomic_DNA"/>
</dbReference>
<dbReference type="SMR" id="Q1HKA1"/>
<dbReference type="CTD" id="4512"/>
<dbReference type="UniPathway" id="UPA00705"/>
<dbReference type="GO" id="GO:0005743">
    <property type="term" value="C:mitochondrial inner membrane"/>
    <property type="evidence" value="ECO:0007669"/>
    <property type="project" value="UniProtKB-SubCell"/>
</dbReference>
<dbReference type="GO" id="GO:0045277">
    <property type="term" value="C:respiratory chain complex IV"/>
    <property type="evidence" value="ECO:0000250"/>
    <property type="project" value="UniProtKB"/>
</dbReference>
<dbReference type="GO" id="GO:0004129">
    <property type="term" value="F:cytochrome-c oxidase activity"/>
    <property type="evidence" value="ECO:0007669"/>
    <property type="project" value="UniProtKB-EC"/>
</dbReference>
<dbReference type="GO" id="GO:0020037">
    <property type="term" value="F:heme binding"/>
    <property type="evidence" value="ECO:0007669"/>
    <property type="project" value="InterPro"/>
</dbReference>
<dbReference type="GO" id="GO:0046872">
    <property type="term" value="F:metal ion binding"/>
    <property type="evidence" value="ECO:0007669"/>
    <property type="project" value="UniProtKB-KW"/>
</dbReference>
<dbReference type="GO" id="GO:0015990">
    <property type="term" value="P:electron transport coupled proton transport"/>
    <property type="evidence" value="ECO:0007669"/>
    <property type="project" value="TreeGrafter"/>
</dbReference>
<dbReference type="GO" id="GO:0006123">
    <property type="term" value="P:mitochondrial electron transport, cytochrome c to oxygen"/>
    <property type="evidence" value="ECO:0007669"/>
    <property type="project" value="TreeGrafter"/>
</dbReference>
<dbReference type="CDD" id="cd01663">
    <property type="entry name" value="Cyt_c_Oxidase_I"/>
    <property type="match status" value="1"/>
</dbReference>
<dbReference type="FunFam" id="1.20.210.10:FF:000001">
    <property type="entry name" value="Cytochrome c oxidase subunit 1"/>
    <property type="match status" value="1"/>
</dbReference>
<dbReference type="Gene3D" id="1.20.210.10">
    <property type="entry name" value="Cytochrome c oxidase-like, subunit I domain"/>
    <property type="match status" value="1"/>
</dbReference>
<dbReference type="InterPro" id="IPR023616">
    <property type="entry name" value="Cyt_c_oxase-like_su1_dom"/>
</dbReference>
<dbReference type="InterPro" id="IPR036927">
    <property type="entry name" value="Cyt_c_oxase-like_su1_sf"/>
</dbReference>
<dbReference type="InterPro" id="IPR000883">
    <property type="entry name" value="Cyt_C_Oxase_1"/>
</dbReference>
<dbReference type="InterPro" id="IPR023615">
    <property type="entry name" value="Cyt_c_Oxase_su1_BS"/>
</dbReference>
<dbReference type="InterPro" id="IPR033944">
    <property type="entry name" value="Cyt_c_oxase_su1_dom"/>
</dbReference>
<dbReference type="PANTHER" id="PTHR10422">
    <property type="entry name" value="CYTOCHROME C OXIDASE SUBUNIT 1"/>
    <property type="match status" value="1"/>
</dbReference>
<dbReference type="PANTHER" id="PTHR10422:SF18">
    <property type="entry name" value="CYTOCHROME C OXIDASE SUBUNIT 1"/>
    <property type="match status" value="1"/>
</dbReference>
<dbReference type="Pfam" id="PF00115">
    <property type="entry name" value="COX1"/>
    <property type="match status" value="1"/>
</dbReference>
<dbReference type="PRINTS" id="PR01165">
    <property type="entry name" value="CYCOXIDASEI"/>
</dbReference>
<dbReference type="SUPFAM" id="SSF81442">
    <property type="entry name" value="Cytochrome c oxidase subunit I-like"/>
    <property type="match status" value="1"/>
</dbReference>
<dbReference type="PROSITE" id="PS50855">
    <property type="entry name" value="COX1"/>
    <property type="match status" value="1"/>
</dbReference>
<dbReference type="PROSITE" id="PS00077">
    <property type="entry name" value="COX1_CUB"/>
    <property type="match status" value="1"/>
</dbReference>
<proteinExistence type="inferred from homology"/>
<name>COX1_CANLU</name>
<geneLocation type="mitochondrion"/>